<accession>C3P0E9</accession>
<organism>
    <name type="scientific">Bacillus anthracis (strain A0248)</name>
    <dbReference type="NCBI Taxonomy" id="592021"/>
    <lineage>
        <taxon>Bacteria</taxon>
        <taxon>Bacillati</taxon>
        <taxon>Bacillota</taxon>
        <taxon>Bacilli</taxon>
        <taxon>Bacillales</taxon>
        <taxon>Bacillaceae</taxon>
        <taxon>Bacillus</taxon>
        <taxon>Bacillus cereus group</taxon>
    </lineage>
</organism>
<gene>
    <name evidence="1" type="primary">rbsD</name>
    <name type="ordered locus">BAA_0750</name>
</gene>
<sequence length="131" mass="14271">MKKHGVLNSEIAAVLASLGHTDTIVIADCGLPIPDGVKRIDLAVEIGKPSFLDVLQVVADDMAIEKVTLAEEVINNNAEVNKEIELKLIEPAFEYVCHEQFKEHTKKAKAIIRTGEATPYANVILHAGVIF</sequence>
<protein>
    <recommendedName>
        <fullName evidence="1">D-ribose pyranase</fullName>
        <ecNumber evidence="1">5.4.99.62</ecNumber>
    </recommendedName>
</protein>
<keyword id="KW-0119">Carbohydrate metabolism</keyword>
<keyword id="KW-0963">Cytoplasm</keyword>
<keyword id="KW-0413">Isomerase</keyword>
<feature type="chain" id="PRO_1000187128" description="D-ribose pyranase">
    <location>
        <begin position="1"/>
        <end position="131"/>
    </location>
</feature>
<feature type="active site" description="Proton donor" evidence="1">
    <location>
        <position position="20"/>
    </location>
</feature>
<feature type="binding site" evidence="1">
    <location>
        <position position="28"/>
    </location>
    <ligand>
        <name>substrate</name>
    </ligand>
</feature>
<feature type="binding site" evidence="1">
    <location>
        <position position="98"/>
    </location>
    <ligand>
        <name>substrate</name>
    </ligand>
</feature>
<feature type="binding site" evidence="1">
    <location>
        <begin position="120"/>
        <end position="122"/>
    </location>
    <ligand>
        <name>substrate</name>
    </ligand>
</feature>
<proteinExistence type="inferred from homology"/>
<comment type="function">
    <text evidence="1">Catalyzes the interconversion of beta-pyran and beta-furan forms of D-ribose.</text>
</comment>
<comment type="catalytic activity">
    <reaction evidence="1">
        <text>beta-D-ribopyranose = beta-D-ribofuranose</text>
        <dbReference type="Rhea" id="RHEA:25432"/>
        <dbReference type="ChEBI" id="CHEBI:27476"/>
        <dbReference type="ChEBI" id="CHEBI:47002"/>
        <dbReference type="EC" id="5.4.99.62"/>
    </reaction>
</comment>
<comment type="pathway">
    <text evidence="1">Carbohydrate metabolism; D-ribose degradation; D-ribose 5-phosphate from beta-D-ribopyranose: step 1/2.</text>
</comment>
<comment type="subunit">
    <text evidence="1">Homodecamer.</text>
</comment>
<comment type="subcellular location">
    <subcellularLocation>
        <location evidence="1">Cytoplasm</location>
    </subcellularLocation>
</comment>
<comment type="similarity">
    <text evidence="1">Belongs to the RbsD / FucU family. RbsD subfamily.</text>
</comment>
<name>RBSD_BACAA</name>
<reference key="1">
    <citation type="submission" date="2009-04" db="EMBL/GenBank/DDBJ databases">
        <title>Genome sequence of Bacillus anthracis A0248.</title>
        <authorList>
            <person name="Dodson R.J."/>
            <person name="Munk A.C."/>
            <person name="Bruce D."/>
            <person name="Detter C."/>
            <person name="Tapia R."/>
            <person name="Sutton G."/>
            <person name="Sims D."/>
            <person name="Brettin T."/>
        </authorList>
    </citation>
    <scope>NUCLEOTIDE SEQUENCE [LARGE SCALE GENOMIC DNA]</scope>
    <source>
        <strain>A0248</strain>
    </source>
</reference>
<evidence type="ECO:0000255" key="1">
    <source>
        <dbReference type="HAMAP-Rule" id="MF_01661"/>
    </source>
</evidence>
<dbReference type="EC" id="5.4.99.62" evidence="1"/>
<dbReference type="EMBL" id="CP001598">
    <property type="protein sequence ID" value="ACQ46133.1"/>
    <property type="molecule type" value="Genomic_DNA"/>
</dbReference>
<dbReference type="RefSeq" id="WP_000716140.1">
    <property type="nucleotide sequence ID" value="NC_012659.1"/>
</dbReference>
<dbReference type="SMR" id="C3P0E9"/>
<dbReference type="GeneID" id="45020726"/>
<dbReference type="KEGG" id="bai:BAA_0750"/>
<dbReference type="HOGENOM" id="CLU_135498_0_0_9"/>
<dbReference type="UniPathway" id="UPA00916">
    <property type="reaction ID" value="UER00888"/>
</dbReference>
<dbReference type="GO" id="GO:0005829">
    <property type="term" value="C:cytosol"/>
    <property type="evidence" value="ECO:0007669"/>
    <property type="project" value="TreeGrafter"/>
</dbReference>
<dbReference type="GO" id="GO:0062193">
    <property type="term" value="F:D-ribose pyranase activity"/>
    <property type="evidence" value="ECO:0007669"/>
    <property type="project" value="UniProtKB-EC"/>
</dbReference>
<dbReference type="GO" id="GO:0016872">
    <property type="term" value="F:intramolecular lyase activity"/>
    <property type="evidence" value="ECO:0007669"/>
    <property type="project" value="UniProtKB-UniRule"/>
</dbReference>
<dbReference type="GO" id="GO:0048029">
    <property type="term" value="F:monosaccharide binding"/>
    <property type="evidence" value="ECO:0007669"/>
    <property type="project" value="InterPro"/>
</dbReference>
<dbReference type="GO" id="GO:0019303">
    <property type="term" value="P:D-ribose catabolic process"/>
    <property type="evidence" value="ECO:0007669"/>
    <property type="project" value="UniProtKB-UniRule"/>
</dbReference>
<dbReference type="FunFam" id="3.40.1650.10:FF:000003">
    <property type="entry name" value="D-ribose pyranase"/>
    <property type="match status" value="1"/>
</dbReference>
<dbReference type="Gene3D" id="3.40.1650.10">
    <property type="entry name" value="RbsD-like domain"/>
    <property type="match status" value="1"/>
</dbReference>
<dbReference type="HAMAP" id="MF_01661">
    <property type="entry name" value="D_rib_pyranase"/>
    <property type="match status" value="1"/>
</dbReference>
<dbReference type="InterPro" id="IPR023064">
    <property type="entry name" value="D-ribose_pyranase"/>
</dbReference>
<dbReference type="InterPro" id="IPR023750">
    <property type="entry name" value="RbsD-like_sf"/>
</dbReference>
<dbReference type="InterPro" id="IPR007721">
    <property type="entry name" value="RbsD_FucU"/>
</dbReference>
<dbReference type="NCBIfam" id="NF008761">
    <property type="entry name" value="PRK11797.1"/>
    <property type="match status" value="1"/>
</dbReference>
<dbReference type="PANTHER" id="PTHR37831">
    <property type="entry name" value="D-RIBOSE PYRANASE"/>
    <property type="match status" value="1"/>
</dbReference>
<dbReference type="PANTHER" id="PTHR37831:SF1">
    <property type="entry name" value="D-RIBOSE PYRANASE"/>
    <property type="match status" value="1"/>
</dbReference>
<dbReference type="Pfam" id="PF05025">
    <property type="entry name" value="RbsD_FucU"/>
    <property type="match status" value="1"/>
</dbReference>
<dbReference type="SUPFAM" id="SSF102546">
    <property type="entry name" value="RbsD-like"/>
    <property type="match status" value="1"/>
</dbReference>